<accession>B3A0R3</accession>
<organism>
    <name type="scientific">Lottia gigantea</name>
    <name type="common">Giant owl limpet</name>
    <dbReference type="NCBI Taxonomy" id="225164"/>
    <lineage>
        <taxon>Eukaryota</taxon>
        <taxon>Metazoa</taxon>
        <taxon>Spiralia</taxon>
        <taxon>Lophotrochozoa</taxon>
        <taxon>Mollusca</taxon>
        <taxon>Gastropoda</taxon>
        <taxon>Patellogastropoda</taxon>
        <taxon>Lottioidea</taxon>
        <taxon>Lottiidae</taxon>
        <taxon>Lottia</taxon>
    </lineage>
</organism>
<sequence length="264" mass="28214">MMWNYFVTCIVLYANIISIHTFGLTGGNNLNQALGLTGGNPLDSTLGLSAGNAFPSGMGAMQIPAYLRMAPSVETICSTQSPLLNPRERNGLLSDLVGKEISRRSRFLAANPSLAGTGKWACAANYYSNVMRYRPNELGNVFGDLIDSTGCDGFTCDMVRGVRKTSPMSNFLNAMMISQMMQQPNAAQVPTTSQQQPTSNTGGQQPPTNASNPPTNPQPTPTPAQPTPSGTQVQQTPAANNGLDLTSMFNNPAFQEQLMRLVST</sequence>
<dbReference type="EMBL" id="FC630959">
    <property type="status" value="NOT_ANNOTATED_CDS"/>
    <property type="molecule type" value="mRNA"/>
</dbReference>
<dbReference type="GO" id="GO:0005576">
    <property type="term" value="C:extracellular region"/>
    <property type="evidence" value="ECO:0007669"/>
    <property type="project" value="UniProtKB-SubCell"/>
</dbReference>
<feature type="signal peptide" evidence="1">
    <location>
        <begin position="1"/>
        <end position="21"/>
    </location>
</feature>
<feature type="chain" id="PRO_0000415235" description="Uncharacterized shell protein 13" evidence="1">
    <location>
        <begin position="22"/>
        <end position="264"/>
    </location>
</feature>
<feature type="region of interest" description="Disordered" evidence="2">
    <location>
        <begin position="182"/>
        <end position="247"/>
    </location>
</feature>
<feature type="compositionally biased region" description="Low complexity" evidence="2">
    <location>
        <begin position="190"/>
        <end position="213"/>
    </location>
</feature>
<feature type="compositionally biased region" description="Pro residues" evidence="2">
    <location>
        <begin position="214"/>
        <end position="226"/>
    </location>
</feature>
<feature type="compositionally biased region" description="Polar residues" evidence="2">
    <location>
        <begin position="230"/>
        <end position="247"/>
    </location>
</feature>
<feature type="glycosylation site" description="N-linked (GlcNAc...) asparagine" evidence="1">
    <location>
        <position position="209"/>
    </location>
</feature>
<keyword id="KW-0903">Direct protein sequencing</keyword>
<keyword id="KW-0325">Glycoprotein</keyword>
<keyword id="KW-0964">Secreted</keyword>
<keyword id="KW-0732">Signal</keyword>
<evidence type="ECO:0000255" key="1"/>
<evidence type="ECO:0000256" key="2">
    <source>
        <dbReference type="SAM" id="MobiDB-lite"/>
    </source>
</evidence>
<evidence type="ECO:0000269" key="3">
    <source>
    </source>
</evidence>
<evidence type="ECO:0000269" key="4">
    <source ref="1"/>
</evidence>
<evidence type="ECO:0000305" key="5"/>
<proteinExistence type="evidence at protein level"/>
<protein>
    <recommendedName>
        <fullName>Uncharacterized shell protein 13</fullName>
        <shortName>LUSP-13</shortName>
    </recommendedName>
</protein>
<name>USP13_LOTGI</name>
<reference evidence="5" key="1">
    <citation type="submission" date="2007-12" db="EMBL/GenBank/DDBJ databases">
        <title>DOE Joint Genome Institute Lottia gigantea EST project.</title>
        <authorList>
            <person name="Richardson P."/>
            <person name="Lucas S."/>
            <person name="Rokhsar D."/>
            <person name="Wang M."/>
            <person name="Lindquist E.A."/>
        </authorList>
    </citation>
    <scope>NUCLEOTIDE SEQUENCE [LARGE SCALE MRNA]</scope>
    <scope>IDENTIFICATION</scope>
    <source>
        <tissue evidence="4">Mantle</tissue>
    </source>
</reference>
<reference key="2">
    <citation type="journal article" date="2013" name="FEBS J.">
        <title>The shell-forming proteome of Lottia gigantea reveals both deep conservations and lineage-specific novelties.</title>
        <authorList>
            <person name="Marie B."/>
            <person name="Jackson D.J."/>
            <person name="Ramos-Silva P."/>
            <person name="Zanella-Cleon I."/>
            <person name="Guichard N."/>
            <person name="Marin F."/>
        </authorList>
    </citation>
    <scope>PROTEIN SEQUENCE OF 107-132</scope>
    <scope>SUBCELLULAR LOCATION</scope>
    <scope>TISSUE SPECIFICITY</scope>
    <source>
        <tissue>Shell</tissue>
    </source>
</reference>
<comment type="subcellular location">
    <subcellularLocation>
        <location evidence="3">Secreted</location>
    </subcellularLocation>
</comment>
<comment type="tissue specificity">
    <text evidence="3">Component of the acid-insoluble and acid-soluble organic matrix of calcified layers of the shell (at protein level).</text>
</comment>